<comment type="function">
    <text evidence="5 7 8">Interferes with CBL-mediated down-regulation and degradation of receptor-type tyrosine kinases. Promotes accumulation of activated target receptors, such as T-cell receptors, EGFR and PDGFRB, on the cell surface. Exhibits negligible protein tyrosine phosphatase activity at neutral pH. May act as a dominant-negative regulator of UBASH3B-dependent dephosphorylation. May inhibit dynamin-dependent endocytic pathways by functionally sequestering dynamin via its SH3 domain.</text>
</comment>
<comment type="subunit">
    <text evidence="4 5 7">Homodimer or homooligomer. Interacts with CBL. Part of a complex containing CBL and activated EGFR. Interacts with ubiquitin and with mono-ubiquitinated proteins. Interacts with dynamin.</text>
</comment>
<comment type="interaction">
    <interactant intactId="EBI-2105393">
        <id>P57075</id>
    </interactant>
    <interactant intactId="EBI-740135">
        <id>P35520</id>
        <label>CBS</label>
    </interactant>
    <organismsDiffer>false</organismsDiffer>
    <experiments>4</experiments>
</comment>
<comment type="interaction">
    <interactant intactId="EBI-2105393">
        <id>P57075</id>
    </interactant>
    <interactant intactId="EBI-724310">
        <id>Q15038</id>
        <label>DAZAP2</label>
    </interactant>
    <organismsDiffer>false</organismsDiffer>
    <experiments>4</experiments>
</comment>
<comment type="interaction">
    <interactant intactId="EBI-2105393">
        <id>P57075</id>
    </interactant>
    <interactant intactId="EBI-10215868">
        <id>Q6FHJ6</id>
        <label>KCNE1</label>
    </interactant>
    <organismsDiffer>false</organismsDiffer>
    <experiments>3</experiments>
</comment>
<comment type="interaction">
    <interactant intactId="EBI-2105393">
        <id>P57075</id>
    </interactant>
    <interactant intactId="EBI-10171697">
        <id>Q6A162</id>
        <label>KRT40</label>
    </interactant>
    <organismsDiffer>false</organismsDiffer>
    <experiments>3</experiments>
</comment>
<comment type="interaction">
    <interactant intactId="EBI-2105393">
        <id>P57075</id>
    </interactant>
    <interactant intactId="EBI-307352">
        <id>Q04864</id>
        <label>REL</label>
    </interactant>
    <organismsDiffer>false</organismsDiffer>
    <experiments>3</experiments>
</comment>
<comment type="interaction">
    <interactant intactId="EBI-2105393">
        <id>P57075</id>
    </interactant>
    <interactant intactId="EBI-348469">
        <id>Q15427</id>
        <label>SF3B4</label>
    </interactant>
    <organismsDiffer>false</organismsDiffer>
    <experiments>3</experiments>
</comment>
<comment type="interaction">
    <interactant intactId="EBI-2105393">
        <id>P57075</id>
    </interactant>
    <interactant intactId="EBI-742487">
        <id>O43597</id>
        <label>SPRY2</label>
    </interactant>
    <organismsDiffer>false</organismsDiffer>
    <experiments>4</experiments>
</comment>
<comment type="interaction">
    <interactant intactId="EBI-2105393">
        <id>P57075</id>
    </interactant>
    <interactant intactId="EBI-10175039">
        <id>Q13625-3</id>
        <label>TP53BP2</label>
    </interactant>
    <organismsDiffer>false</organismsDiffer>
    <experiments>3</experiments>
</comment>
<comment type="interaction">
    <interactant intactId="EBI-2105393">
        <id>P57075</id>
    </interactant>
    <interactant intactId="EBI-741602">
        <id>O94972</id>
        <label>TRIM37</label>
    </interactant>
    <organismsDiffer>false</organismsDiffer>
    <experiments>3</experiments>
</comment>
<comment type="interaction">
    <interactant intactId="EBI-7353612">
        <id>P57075-2</id>
    </interactant>
    <interactant intactId="EBI-2339564">
        <id>Q8N5I2</id>
        <label>ARRDC1</label>
    </interactant>
    <organismsDiffer>false</organismsDiffer>
    <experiments>3</experiments>
</comment>
<comment type="interaction">
    <interactant intactId="EBI-7353612">
        <id>P57075-2</id>
    </interactant>
    <interactant intactId="EBI-2875665">
        <id>Q96B67</id>
        <label>ARRDC3</label>
    </interactant>
    <organismsDiffer>false</organismsDiffer>
    <experiments>3</experiments>
</comment>
<comment type="interaction">
    <interactant intactId="EBI-7353612">
        <id>P57075-2</id>
    </interactant>
    <interactant intactId="EBI-702336">
        <id>O75815</id>
        <label>BCAR3</label>
    </interactant>
    <organismsDiffer>false</organismsDiffer>
    <experiments>3</experiments>
</comment>
<comment type="interaction">
    <interactant intactId="EBI-7353612">
        <id>P57075-2</id>
    </interactant>
    <interactant intactId="EBI-744027">
        <id>Q13191</id>
        <label>CBLB</label>
    </interactant>
    <organismsDiffer>false</organismsDiffer>
    <experiments>3</experiments>
</comment>
<comment type="interaction">
    <interactant intactId="EBI-7353612">
        <id>P57075-2</id>
    </interactant>
    <interactant intactId="EBI-17466401">
        <id>Q8WXC6-1</id>
        <label>COPS9</label>
    </interactant>
    <organismsDiffer>false</organismsDiffer>
    <experiments>3</experiments>
</comment>
<comment type="interaction">
    <interactant intactId="EBI-7353612">
        <id>P57075-2</id>
    </interactant>
    <interactant intactId="EBI-724310">
        <id>Q15038</id>
        <label>DAZAP2</label>
    </interactant>
    <organismsDiffer>false</organismsDiffer>
    <experiments>3</experiments>
</comment>
<comment type="interaction">
    <interactant intactId="EBI-7353612">
        <id>P57075-2</id>
    </interactant>
    <interactant intactId="EBI-25840379">
        <id>Q14203-5</id>
        <label>DCTN1</label>
    </interactant>
    <organismsDiffer>false</organismsDiffer>
    <experiments>3</experiments>
</comment>
<comment type="interaction">
    <interactant intactId="EBI-7353612">
        <id>P57075-2</id>
    </interactant>
    <interactant intactId="EBI-742054">
        <id>Q96D03</id>
        <label>DDIT4L</label>
    </interactant>
    <organismsDiffer>false</organismsDiffer>
    <experiments>3</experiments>
</comment>
<comment type="interaction">
    <interactant intactId="EBI-7353612">
        <id>P57075-2</id>
    </interactant>
    <interactant intactId="EBI-11988027">
        <id>Q9NRI5-2</id>
        <label>DISC1</label>
    </interactant>
    <organismsDiffer>false</organismsDiffer>
    <experiments>3</experiments>
</comment>
<comment type="interaction">
    <interactant intactId="EBI-7353612">
        <id>P57075-2</id>
    </interactant>
    <interactant intactId="EBI-12000556">
        <id>Q9Y2H0-1</id>
        <label>DLGAP4</label>
    </interactant>
    <organismsDiffer>false</organismsDiffer>
    <experiments>3</experiments>
</comment>
<comment type="interaction">
    <interactant intactId="EBI-7353612">
        <id>P57075-2</id>
    </interactant>
    <interactant intactId="EBI-346547">
        <id>P50570</id>
        <label>DNM2</label>
    </interactant>
    <organismsDiffer>false</organismsDiffer>
    <experiments>3</experiments>
</comment>
<comment type="interaction">
    <interactant intactId="EBI-7353612">
        <id>P57075-2</id>
    </interactant>
    <interactant intactId="EBI-2340258">
        <id>Q8N9I9</id>
        <label>DTX3</label>
    </interactant>
    <organismsDiffer>false</organismsDiffer>
    <experiments>3</experiments>
</comment>
<comment type="interaction">
    <interactant intactId="EBI-7353612">
        <id>P57075-2</id>
    </interactant>
    <interactant intactId="EBI-3943864">
        <id>Q8N9I5</id>
        <label>FADS6</label>
    </interactant>
    <organismsDiffer>false</organismsDiffer>
    <experiments>3</experiments>
</comment>
<comment type="interaction">
    <interactant intactId="EBI-7353612">
        <id>P57075-2</id>
    </interactant>
    <interactant intactId="EBI-1384254">
        <id>Q86UY5</id>
        <label>FAM83A</label>
    </interactant>
    <organismsDiffer>false</organismsDiffer>
    <experiments>3</experiments>
</comment>
<comment type="interaction">
    <interactant intactId="EBI-7353612">
        <id>P57075-2</id>
    </interactant>
    <interactant intactId="EBI-12377025">
        <id>Q9NVK5-3</id>
        <label>FGFR1OP2</label>
    </interactant>
    <organismsDiffer>false</organismsDiffer>
    <experiments>3</experiments>
</comment>
<comment type="interaction">
    <interactant intactId="EBI-7353612">
        <id>P57075-2</id>
    </interactant>
    <interactant intactId="EBI-744302">
        <id>P14136</id>
        <label>GFAP</label>
    </interactant>
    <organismsDiffer>false</organismsDiffer>
    <experiments>3</experiments>
</comment>
<comment type="interaction">
    <interactant intactId="EBI-7353612">
        <id>P57075-2</id>
    </interactant>
    <interactant intactId="EBI-5916454">
        <id>A6NEM1</id>
        <label>GOLGA6L9</label>
    </interactant>
    <organismsDiffer>false</organismsDiffer>
    <experiments>3</experiments>
</comment>
<comment type="interaction">
    <interactant intactId="EBI-7353612">
        <id>P57075-2</id>
    </interactant>
    <interactant intactId="EBI-18398632">
        <id>Q9ULR0-1</id>
        <label>ISY1</label>
    </interactant>
    <organismsDiffer>false</organismsDiffer>
    <experiments>3</experiments>
</comment>
<comment type="interaction">
    <interactant intactId="EBI-7353612">
        <id>P57075-2</id>
    </interactant>
    <interactant intactId="EBI-9027502">
        <id>Q719H9</id>
        <label>KCTD1</label>
    </interactant>
    <organismsDiffer>false</organismsDiffer>
    <experiments>3</experiments>
</comment>
<comment type="interaction">
    <interactant intactId="EBI-7353612">
        <id>P57075-2</id>
    </interactant>
    <interactant intactId="EBI-739493">
        <id>Q6ZU52</id>
        <label>KIAA0408</label>
    </interactant>
    <organismsDiffer>false</organismsDiffer>
    <experiments>3</experiments>
</comment>
<comment type="interaction">
    <interactant intactId="EBI-7353612">
        <id>P57075-2</id>
    </interactant>
    <interactant intactId="EBI-10981970">
        <id>Q5T749</id>
        <label>KPRP</label>
    </interactant>
    <organismsDiffer>false</organismsDiffer>
    <experiments>5</experiments>
</comment>
<comment type="interaction">
    <interactant intactId="EBI-7353612">
        <id>P57075-2</id>
    </interactant>
    <interactant intactId="EBI-702178">
        <id>P02533</id>
        <label>KRT14</label>
    </interactant>
    <organismsDiffer>false</organismsDiffer>
    <experiments>3</experiments>
</comment>
<comment type="interaction">
    <interactant intactId="EBI-7353612">
        <id>P57075-2</id>
    </interactant>
    <interactant intactId="EBI-948001">
        <id>Q15323</id>
        <label>KRT31</label>
    </interactant>
    <organismsDiffer>false</organismsDiffer>
    <experiments>3</experiments>
</comment>
<comment type="interaction">
    <interactant intactId="EBI-7353612">
        <id>P57075-2</id>
    </interactant>
    <interactant intactId="EBI-1044146">
        <id>Q14532</id>
        <label>KRT32</label>
    </interactant>
    <organismsDiffer>false</organismsDiffer>
    <experiments>3</experiments>
</comment>
<comment type="interaction">
    <interactant intactId="EBI-7353612">
        <id>P57075-2</id>
    </interactant>
    <interactant intactId="EBI-1058674">
        <id>Q92764</id>
        <label>KRT35</label>
    </interactant>
    <organismsDiffer>false</organismsDiffer>
    <experiments>3</experiments>
</comment>
<comment type="interaction">
    <interactant intactId="EBI-7353612">
        <id>P57075-2</id>
    </interactant>
    <interactant intactId="EBI-11958242">
        <id>Q6A163</id>
        <label>KRT39</label>
    </interactant>
    <organismsDiffer>false</organismsDiffer>
    <experiments>5</experiments>
</comment>
<comment type="interaction">
    <interactant intactId="EBI-7353612">
        <id>P57075-2</id>
    </interactant>
    <interactant intactId="EBI-11911016">
        <id>P80188</id>
        <label>LCN2</label>
    </interactant>
    <organismsDiffer>false</organismsDiffer>
    <experiments>3</experiments>
</comment>
<comment type="interaction">
    <interactant intactId="EBI-7353612">
        <id>P57075-2</id>
    </interactant>
    <interactant intactId="EBI-739832">
        <id>Q8TBB1</id>
        <label>LNX1</label>
    </interactant>
    <organismsDiffer>false</organismsDiffer>
    <experiments>3</experiments>
</comment>
<comment type="interaction">
    <interactant intactId="EBI-7353612">
        <id>P57075-2</id>
    </interactant>
    <interactant intactId="EBI-1216080">
        <id>Q9Y250</id>
        <label>LZTS1</label>
    </interactant>
    <organismsDiffer>false</organismsDiffer>
    <experiments>3</experiments>
</comment>
<comment type="interaction">
    <interactant intactId="EBI-7353612">
        <id>P57075-2</id>
    </interactant>
    <interactant intactId="EBI-741037">
        <id>Q9BRK4</id>
        <label>LZTS2</label>
    </interactant>
    <organismsDiffer>false</organismsDiffer>
    <experiments>3</experiments>
</comment>
<comment type="interaction">
    <interactant intactId="EBI-7353612">
        <id>P57075-2</id>
    </interactant>
    <interactant intactId="EBI-373524">
        <id>Q9UHC7</id>
        <label>MKRN1</label>
    </interactant>
    <organismsDiffer>false</organismsDiffer>
    <experiments>3</experiments>
</comment>
<comment type="interaction">
    <interactant intactId="EBI-7353612">
        <id>P57075-2</id>
    </interactant>
    <interactant intactId="EBI-2512055">
        <id>O15049</id>
        <label>N4BP3</label>
    </interactant>
    <organismsDiffer>false</organismsDiffer>
    <experiments>3</experiments>
</comment>
<comment type="interaction">
    <interactant intactId="EBI-7353612">
        <id>P57075-2</id>
    </interactant>
    <interactant intactId="EBI-12028784">
        <id>Q6X4W1-2</id>
        <label>NSMF</label>
    </interactant>
    <organismsDiffer>false</organismsDiffer>
    <experiments>3</experiments>
</comment>
<comment type="interaction">
    <interactant intactId="EBI-7353612">
        <id>P57075-2</id>
    </interactant>
    <interactant intactId="EBI-373552">
        <id>Q96CS7</id>
        <label>PLEKHB2</label>
    </interactant>
    <organismsDiffer>false</organismsDiffer>
    <experiments>3</experiments>
</comment>
<comment type="interaction">
    <interactant intactId="EBI-7353612">
        <id>P57075-2</id>
    </interactant>
    <interactant intactId="EBI-13318883">
        <id>Q969W9-2</id>
        <label>PMEPA1</label>
    </interactant>
    <organismsDiffer>false</organismsDiffer>
    <experiments>3</experiments>
</comment>
<comment type="interaction">
    <interactant intactId="EBI-7353612">
        <id>P57075-2</id>
    </interactant>
    <interactant intactId="EBI-10171633">
        <id>Q96PV4</id>
        <label>PNMA5</label>
    </interactant>
    <organismsDiffer>false</organismsDiffer>
    <experiments>3</experiments>
</comment>
<comment type="interaction">
    <interactant intactId="EBI-7353612">
        <id>P57075-2</id>
    </interactant>
    <interactant intactId="EBI-11320284">
        <id>Q9NQX0</id>
        <label>PRDM6</label>
    </interactant>
    <organismsDiffer>false</organismsDiffer>
    <experiments>3</experiments>
</comment>
<comment type="interaction">
    <interactant intactId="EBI-7353612">
        <id>P57075-2</id>
    </interactant>
    <interactant intactId="EBI-21251460">
        <id>O60260-5</id>
        <label>PRKN</label>
    </interactant>
    <organismsDiffer>false</organismsDiffer>
    <experiments>6</experiments>
</comment>
<comment type="interaction">
    <interactant intactId="EBI-7353612">
        <id>P57075-2</id>
    </interactant>
    <interactant intactId="EBI-396669">
        <id>Q9Y3C5</id>
        <label>RNF11</label>
    </interactant>
    <organismsDiffer>false</organismsDiffer>
    <experiments>3</experiments>
</comment>
<comment type="interaction">
    <interactant intactId="EBI-7353612">
        <id>P57075-2</id>
    </interactant>
    <interactant intactId="EBI-723313">
        <id>Q9NWF9</id>
        <label>RNF216</label>
    </interactant>
    <organismsDiffer>false</organismsDiffer>
    <experiments>3</experiments>
</comment>
<comment type="interaction">
    <interactant intactId="EBI-7353612">
        <id>P57075-2</id>
    </interactant>
    <interactant intactId="EBI-12037847">
        <id>Q6ZSJ9</id>
        <label>SHISA6</label>
    </interactant>
    <organismsDiffer>false</organismsDiffer>
    <experiments>3</experiments>
</comment>
<comment type="interaction">
    <interactant intactId="EBI-7353612">
        <id>P57075-2</id>
    </interactant>
    <interactant intactId="EBI-1222854">
        <id>Q9H6Q3</id>
        <label>SLA2</label>
    </interactant>
    <organismsDiffer>false</organismsDiffer>
    <experiments>3</experiments>
</comment>
<comment type="interaction">
    <interactant intactId="EBI-7353612">
        <id>P57075-2</id>
    </interactant>
    <interactant intactId="EBI-2876632">
        <id>Q6IEG0</id>
        <label>SNRNP48</label>
    </interactant>
    <organismsDiffer>false</organismsDiffer>
    <experiments>3</experiments>
</comment>
<comment type="interaction">
    <interactant intactId="EBI-7353612">
        <id>P57075-2</id>
    </interactant>
    <interactant intactId="EBI-297487">
        <id>Q07889</id>
        <label>SOS1</label>
    </interactant>
    <organismsDiffer>false</organismsDiffer>
    <experiments>3</experiments>
</comment>
<comment type="interaction">
    <interactant intactId="EBI-7353612">
        <id>P57075-2</id>
    </interactant>
    <interactant intactId="EBI-10269322">
        <id>Q8NCR6</id>
        <label>SPMIP6</label>
    </interactant>
    <organismsDiffer>false</organismsDiffer>
    <experiments>3</experiments>
</comment>
<comment type="interaction">
    <interactant intactId="EBI-7353612">
        <id>P57075-2</id>
    </interactant>
    <interactant intactId="EBI-3866665">
        <id>O43609</id>
        <label>SPRY1</label>
    </interactant>
    <organismsDiffer>false</organismsDiffer>
    <experiments>3</experiments>
</comment>
<comment type="interaction">
    <interactant intactId="EBI-7353612">
        <id>P57075-2</id>
    </interactant>
    <interactant intactId="EBI-714135">
        <id>O75558</id>
        <label>STX11</label>
    </interactant>
    <organismsDiffer>false</organismsDiffer>
    <experiments>3</experiments>
</comment>
<comment type="interaction">
    <interactant intactId="EBI-7353612">
        <id>P57075-2</id>
    </interactant>
    <interactant intactId="EBI-529518">
        <id>Q86VP1</id>
        <label>TAX1BP1</label>
    </interactant>
    <organismsDiffer>false</organismsDiffer>
    <experiments>3</experiments>
</comment>
<comment type="interaction">
    <interactant intactId="EBI-7353612">
        <id>P57075-2</id>
    </interactant>
    <interactant intactId="EBI-10180409">
        <id>Q969V4</id>
        <label>TEKT1</label>
    </interactant>
    <organismsDiffer>false</organismsDiffer>
    <experiments>3</experiments>
</comment>
<comment type="interaction">
    <interactant intactId="EBI-7353612">
        <id>P57075-2</id>
    </interactant>
    <interactant intactId="EBI-750487">
        <id>Q8WW24</id>
        <label>TEKT4</label>
    </interactant>
    <organismsDiffer>false</organismsDiffer>
    <experiments>3</experiments>
</comment>
<comment type="interaction">
    <interactant intactId="EBI-7353612">
        <id>P57075-2</id>
    </interactant>
    <interactant intactId="EBI-861737">
        <id>O43615</id>
        <label>TIMM44</label>
    </interactant>
    <organismsDiffer>false</organismsDiffer>
    <experiments>3</experiments>
</comment>
<comment type="interaction">
    <interactant intactId="EBI-7353612">
        <id>P57075-2</id>
    </interactant>
    <interactant intactId="EBI-12807858">
        <id>Q7Z6W1</id>
        <label>TMCO2</label>
    </interactant>
    <organismsDiffer>false</organismsDiffer>
    <experiments>3</experiments>
</comment>
<comment type="interaction">
    <interactant intactId="EBI-7353612">
        <id>P57075-2</id>
    </interactant>
    <interactant intactId="EBI-11528917">
        <id>Q8WW34-2</id>
        <label>TMEM239</label>
    </interactant>
    <organismsDiffer>false</organismsDiffer>
    <experiments>3</experiments>
</comment>
<comment type="interaction">
    <interactant intactId="EBI-7353612">
        <id>P57075-2</id>
    </interactant>
    <interactant intactId="EBI-11952721">
        <id>Q05BL1</id>
        <label>TP53BP2</label>
    </interactant>
    <organismsDiffer>false</organismsDiffer>
    <experiments>3</experiments>
</comment>
<comment type="interaction">
    <interactant intactId="EBI-7353612">
        <id>P57075-2</id>
    </interactant>
    <interactant intactId="EBI-2337775">
        <id>Q9H3D4</id>
        <label>TP63</label>
    </interactant>
    <organismsDiffer>false</organismsDiffer>
    <experiments>3</experiments>
</comment>
<comment type="interaction">
    <interactant intactId="EBI-7353612">
        <id>P57075-2</id>
    </interactant>
    <interactant intactId="EBI-719493">
        <id>P14373</id>
        <label>TRIM27</label>
    </interactant>
    <organismsDiffer>false</organismsDiffer>
    <experiments>3</experiments>
</comment>
<comment type="interaction">
    <interactant intactId="EBI-7353612">
        <id>P57075-2</id>
    </interactant>
    <interactant intactId="EBI-12840050">
        <id>Q9C035-3</id>
        <label>TRIM5</label>
    </interactant>
    <organismsDiffer>false</organismsDiffer>
    <experiments>3</experiments>
</comment>
<comment type="interaction">
    <interactant intactId="EBI-7353612">
        <id>P57075-2</id>
    </interactant>
    <interactant intactId="EBI-9867283">
        <id>Q86XT4</id>
        <label>TRIM50</label>
    </interactant>
    <organismsDiffer>false</organismsDiffer>
    <experiments>3</experiments>
</comment>
<comment type="interaction">
    <interactant intactId="EBI-7353612">
        <id>P57075-2</id>
    </interactant>
    <interactant intactId="EBI-2340370">
        <id>Q9BZR9</id>
        <label>TRIM8</label>
    </interactant>
    <organismsDiffer>false</organismsDiffer>
    <experiments>5</experiments>
</comment>
<comment type="interaction">
    <interactant intactId="EBI-7353612">
        <id>P57075-2</id>
    </interactant>
    <interactant intactId="EBI-4400866">
        <id>Q9H9H4</id>
        <label>VPS37B</label>
    </interactant>
    <organismsDiffer>false</organismsDiffer>
    <experiments>3</experiments>
</comment>
<comment type="interaction">
    <interactant intactId="EBI-7353612">
        <id>P57075-2</id>
    </interactant>
    <interactant intactId="EBI-346375">
        <id>P42768</id>
        <label>WAS</label>
    </interactant>
    <organismsDiffer>false</organismsDiffer>
    <experiments>3</experiments>
</comment>
<comment type="interaction">
    <interactant intactId="EBI-7353612">
        <id>P57075-2</id>
    </interactant>
    <interactant intactId="EBI-957615">
        <id>O00401</id>
        <label>WASL</label>
    </interactant>
    <organismsDiffer>false</organismsDiffer>
    <experiments>3</experiments>
</comment>
<comment type="interaction">
    <interactant intactId="EBI-7353612">
        <id>P57075-2</id>
    </interactant>
    <interactant intactId="EBI-714455">
        <id>Q9Y2W2</id>
        <label>WBP11</label>
    </interactant>
    <organismsDiffer>false</organismsDiffer>
    <experiments>3</experiments>
</comment>
<comment type="interaction">
    <interactant intactId="EBI-7353612">
        <id>P57075-2</id>
    </interactant>
    <interactant intactId="EBI-12287587">
        <id>B2RXF5</id>
        <label>ZBTB42</label>
    </interactant>
    <organismsDiffer>false</organismsDiffer>
    <experiments>3</experiments>
</comment>
<comment type="interaction">
    <interactant intactId="EBI-7353612">
        <id>P57075-2</id>
    </interactant>
    <interactant intactId="EBI-14104088">
        <id>Q53FD0-2</id>
        <label>ZC2HC1C</label>
    </interactant>
    <organismsDiffer>false</organismsDiffer>
    <experiments>3</experiments>
</comment>
<comment type="interaction">
    <interactant intactId="EBI-7353612">
        <id>P57075-2</id>
    </interactant>
    <interactant intactId="EBI-3937106">
        <id>Q9P2Y4</id>
        <label>ZNF219</label>
    </interactant>
    <organismsDiffer>false</organismsDiffer>
    <experiments>3</experiments>
</comment>
<comment type="interaction">
    <interactant intactId="EBI-7353612">
        <id>P57075-2</id>
    </interactant>
    <interactant intactId="EBI-17269964">
        <id>Q6S9Z5</id>
        <label>ZNF474</label>
    </interactant>
    <organismsDiffer>false</organismsDiffer>
    <experiments>3</experiments>
</comment>
<comment type="interaction">
    <interactant intactId="EBI-7353612">
        <id>P57075-2</id>
    </interactant>
    <interactant intactId="EBI-527853">
        <id>Q9UGI0</id>
        <label>ZRANB1</label>
    </interactant>
    <organismsDiffer>false</organismsDiffer>
    <experiments>3</experiments>
</comment>
<comment type="interaction">
    <interactant intactId="EBI-7353612">
        <id>P57075-2</id>
    </interactant>
    <interactant intactId="EBI-9088990">
        <id>Q7Z783</id>
    </interactant>
    <organismsDiffer>false</organismsDiffer>
    <experiments>3</experiments>
</comment>
<comment type="subcellular location">
    <subcellularLocation>
        <location>Cytoplasm</location>
    </subcellularLocation>
    <subcellularLocation>
        <location>Nucleus</location>
    </subcellularLocation>
</comment>
<comment type="alternative products">
    <event type="alternative splicing"/>
    <isoform>
        <id>P57075-1</id>
        <name>1</name>
        <name>Long</name>
        <sequence type="displayed"/>
    </isoform>
    <isoform>
        <id>P57075-2</id>
        <name>2</name>
        <name>Short</name>
        <sequence type="described" ref="VSP_006703"/>
    </isoform>
    <isoform>
        <id>P57075-3</id>
        <name>3</name>
        <sequence type="described" ref="VSP_006703 VSP_045549 VSP_045550"/>
    </isoform>
</comment>
<comment type="tissue specificity">
    <text evidence="3 4">Highest expression of UBASH3A in tissues belonging to the immune system, including spleen, peripheral blood leukocytes, thymus and bone marrow.</text>
</comment>
<protein>
    <recommendedName>
        <fullName>Ubiquitin-associated and SH3 domain-containing protein A</fullName>
    </recommendedName>
    <alternativeName>
        <fullName>Cbl-interacting protein 4</fullName>
        <shortName>CLIP4</shortName>
    </alternativeName>
    <alternativeName>
        <fullName>Suppressor of T-cell receptor signaling 2</fullName>
        <shortName>STS-2</shortName>
    </alternativeName>
    <alternativeName>
        <fullName>T-cell ubiquitin ligand 1</fullName>
        <shortName>TULA-1</shortName>
    </alternativeName>
</protein>
<proteinExistence type="evidence at protein level"/>
<feature type="chain" id="PRO_0000210994" description="Ubiquitin-associated and SH3 domain-containing protein A">
    <location>
        <begin position="1"/>
        <end position="661"/>
    </location>
</feature>
<feature type="domain" description="UBA" evidence="2">
    <location>
        <begin position="15"/>
        <end position="60"/>
    </location>
</feature>
<feature type="domain" description="SH3" evidence="1">
    <location>
        <begin position="276"/>
        <end position="341"/>
    </location>
</feature>
<feature type="region of interest" description="Phosphatase-like">
    <location>
        <begin position="395"/>
        <end position="661"/>
    </location>
</feature>
<feature type="splice variant" id="VSP_006703" description="In isoform 2 and isoform 3." evidence="9 10 11">
    <original>GTSVSRFWIFSQVPGHGPNLRLSNLTRASFVSHYILQKY</original>
    <variation>D</variation>
    <location>
        <begin position="185"/>
        <end position="223"/>
    </location>
</feature>
<feature type="splice variant" id="VSP_045549" description="In isoform 3." evidence="11">
    <original>PAFPLSALMPAESYQEYMDR</original>
    <variation>SLPWACASVKKIKRKENGSW</variation>
    <location>
        <begin position="545"/>
        <end position="564"/>
    </location>
</feature>
<feature type="splice variant" id="VSP_045550" description="In isoform 3." evidence="11">
    <location>
        <begin position="565"/>
        <end position="661"/>
    </location>
</feature>
<feature type="sequence variant" id="VAR_026971" description="In dbSNP:rs2277798." evidence="6">
    <original>S</original>
    <variation>G</variation>
    <location>
        <position position="18"/>
    </location>
</feature>
<feature type="sequence variant" id="VAR_026972" description="In dbSNP:rs2277800." evidence="6">
    <original>L</original>
    <variation>F</variation>
    <location>
        <position position="28"/>
    </location>
</feature>
<feature type="sequence variant" id="VAR_026973" description="In dbSNP:rs775952011.">
    <original>Q</original>
    <variation>R</variation>
    <location>
        <position position="286"/>
    </location>
</feature>
<feature type="sequence variant" id="VAR_061921" description="In dbSNP:rs13048049.">
    <original>R</original>
    <variation>L</variation>
    <location>
        <position position="324"/>
    </location>
</feature>
<feature type="sequence variant" id="VAR_061922" description="In dbSNP:rs13048049.">
    <original>R</original>
    <variation>Q</variation>
    <location>
        <position position="324"/>
    </location>
</feature>
<feature type="sequence variant" id="VAR_052675" description="In dbSNP:rs17114930.">
    <original>D</original>
    <variation>E</variation>
    <location>
        <position position="466"/>
    </location>
</feature>
<feature type="mutagenesis site" description="Loss of interaction with CBL." evidence="5 7">
    <original>W</original>
    <variation>A</variation>
    <location>
        <position position="317"/>
    </location>
</feature>
<feature type="mutagenesis site" description="Abolishes binding to dynamin." evidence="5 7">
    <original>W</original>
    <variation>L</variation>
    <location>
        <position position="317"/>
    </location>
</feature>
<feature type="sequence conflict" description="In Ref. 5; AAH69511." evidence="12" ref="5">
    <original>P</original>
    <variation>H</variation>
    <location>
        <position position="64"/>
    </location>
</feature>
<feature type="sequence conflict" description="In Ref. 5; BC069577." evidence="12" ref="5">
    <original>E</original>
    <variation>K</variation>
    <location>
        <position position="129"/>
    </location>
</feature>
<feature type="sequence conflict" description="In Ref. 5; AAH69511." evidence="12" ref="5">
    <original>C</original>
    <variation>Y</variation>
    <location>
        <position position="229"/>
    </location>
</feature>
<feature type="sequence conflict" description="In Ref. 5; AAH69483." evidence="12" ref="5">
    <original>A</original>
    <variation>V</variation>
    <location>
        <position position="283"/>
    </location>
</feature>
<feature type="sequence conflict" description="In Ref. 5; AAH69511." evidence="12" ref="5">
    <original>V</original>
    <variation>I</variation>
    <location>
        <position position="393"/>
    </location>
</feature>
<feature type="sequence conflict" description="In Ref. 5; AAH69511." evidence="12" ref="5">
    <original>A</original>
    <variation>V</variation>
    <location>
        <position position="651"/>
    </location>
</feature>
<feature type="helix" evidence="13">
    <location>
        <begin position="25"/>
        <end position="30"/>
    </location>
</feature>
<feature type="helix" evidence="13">
    <location>
        <begin position="35"/>
        <end position="45"/>
    </location>
</feature>
<feature type="helix" evidence="13">
    <location>
        <begin position="50"/>
        <end position="60"/>
    </location>
</feature>
<feature type="strand" evidence="13">
    <location>
        <begin position="61"/>
        <end position="63"/>
    </location>
</feature>
<feature type="strand" evidence="14">
    <location>
        <begin position="397"/>
        <end position="402"/>
    </location>
</feature>
<feature type="helix" evidence="14">
    <location>
        <begin position="407"/>
        <end position="411"/>
    </location>
</feature>
<feature type="helix" evidence="14">
    <location>
        <begin position="415"/>
        <end position="418"/>
    </location>
</feature>
<feature type="helix" evidence="14">
    <location>
        <begin position="445"/>
        <end position="447"/>
    </location>
</feature>
<feature type="helix" evidence="14">
    <location>
        <begin position="455"/>
        <end position="471"/>
    </location>
</feature>
<feature type="strand" evidence="14">
    <location>
        <begin position="475"/>
        <end position="480"/>
    </location>
</feature>
<feature type="helix" evidence="14">
    <location>
        <begin position="484"/>
        <end position="497"/>
    </location>
</feature>
<feature type="turn" evidence="14">
    <location>
        <begin position="500"/>
        <end position="502"/>
    </location>
</feature>
<feature type="strand" evidence="14">
    <location>
        <begin position="505"/>
        <end position="507"/>
    </location>
</feature>
<feature type="helix" evidence="14">
    <location>
        <begin position="509"/>
        <end position="511"/>
    </location>
</feature>
<feature type="helix" evidence="14">
    <location>
        <begin position="515"/>
        <end position="517"/>
    </location>
</feature>
<feature type="helix" evidence="14">
    <location>
        <begin position="529"/>
        <end position="534"/>
    </location>
</feature>
<feature type="helix" evidence="14">
    <location>
        <begin position="549"/>
        <end position="551"/>
    </location>
</feature>
<feature type="helix" evidence="14">
    <location>
        <begin position="558"/>
        <end position="574"/>
    </location>
</feature>
<feature type="strand" evidence="14">
    <location>
        <begin position="581"/>
        <end position="587"/>
    </location>
</feature>
<feature type="helix" evidence="14">
    <location>
        <begin position="591"/>
        <end position="594"/>
    </location>
</feature>
<feature type="helix" evidence="14">
    <location>
        <begin position="597"/>
        <end position="600"/>
    </location>
</feature>
<feature type="helix" evidence="14">
    <location>
        <begin position="607"/>
        <end position="615"/>
    </location>
</feature>
<feature type="strand" evidence="14">
    <location>
        <begin position="622"/>
        <end position="628"/>
    </location>
</feature>
<feature type="turn" evidence="14">
    <location>
        <begin position="629"/>
        <end position="632"/>
    </location>
</feature>
<feature type="strand" evidence="14">
    <location>
        <begin position="633"/>
        <end position="637"/>
    </location>
</feature>
<feature type="helix" evidence="14">
    <location>
        <begin position="654"/>
        <end position="657"/>
    </location>
</feature>
<organism>
    <name type="scientific">Homo sapiens</name>
    <name type="common">Human</name>
    <dbReference type="NCBI Taxonomy" id="9606"/>
    <lineage>
        <taxon>Eukaryota</taxon>
        <taxon>Metazoa</taxon>
        <taxon>Chordata</taxon>
        <taxon>Craniata</taxon>
        <taxon>Vertebrata</taxon>
        <taxon>Euteleostomi</taxon>
        <taxon>Mammalia</taxon>
        <taxon>Eutheria</taxon>
        <taxon>Euarchontoglires</taxon>
        <taxon>Primates</taxon>
        <taxon>Haplorrhini</taxon>
        <taxon>Catarrhini</taxon>
        <taxon>Hominidae</taxon>
        <taxon>Homo</taxon>
    </lineage>
</organism>
<reference key="1">
    <citation type="journal article" date="2001" name="Hum. Genet.">
        <title>Isolation and characterization of the UBASH3A gene on 21q22.3 encoding a potential nuclear protein with a novel combination of domains.</title>
        <authorList>
            <person name="Wattenhofer M."/>
            <person name="Shibuya K."/>
            <person name="Kudoh J."/>
            <person name="Lyle R."/>
            <person name="Michaud J."/>
            <person name="Rossier C."/>
            <person name="Kawasaki K."/>
            <person name="Asakawa S."/>
            <person name="Minoshima S."/>
            <person name="Berry A."/>
            <person name="Bonne-Tamir B."/>
            <person name="Shimizu N."/>
            <person name="Antonarakis S.E."/>
            <person name="Scott H.S."/>
        </authorList>
    </citation>
    <scope>NUCLEOTIDE SEQUENCE [MRNA] (ISOFORMS 1 AND 2)</scope>
    <scope>TISSUE SPECIFICITY</scope>
    <source>
        <tissue>Placenta</tissue>
    </source>
</reference>
<reference key="2">
    <citation type="journal article" date="2004" name="Oncogene">
        <title>TULA: an SH3- and UBA-containing protein that binds to c-Cbl and ubiquitin.</title>
        <authorList>
            <person name="Feshchenko E.A."/>
            <person name="Smirnova E.V."/>
            <person name="Swaminathan G."/>
            <person name="Teckchandani A.M."/>
            <person name="Agrawal R."/>
            <person name="Band H."/>
            <person name="Zhang X."/>
            <person name="Annan R.S."/>
            <person name="Carr S.A."/>
            <person name="Tsygankov A.Y."/>
        </authorList>
    </citation>
    <scope>NUCLEOTIDE SEQUENCE [MRNA] (ISOFORMS 1 AND 2)</scope>
    <scope>IDENTIFICATION BY MASS SPECTROMETRY</scope>
    <scope>INTERACTION WITH CBL AND UBIQUITIN</scope>
    <scope>SUBCELLULAR LOCATION</scope>
    <scope>TISSUE SPECIFICITY</scope>
    <source>
        <tissue>Leukemia</tissue>
    </source>
</reference>
<reference key="3">
    <citation type="journal article" date="2000" name="Nature">
        <title>The DNA sequence of human chromosome 21.</title>
        <authorList>
            <person name="Hattori M."/>
            <person name="Fujiyama A."/>
            <person name="Taylor T.D."/>
            <person name="Watanabe H."/>
            <person name="Yada T."/>
            <person name="Park H.-S."/>
            <person name="Toyoda A."/>
            <person name="Ishii K."/>
            <person name="Totoki Y."/>
            <person name="Choi D.-K."/>
            <person name="Groner Y."/>
            <person name="Soeda E."/>
            <person name="Ohki M."/>
            <person name="Takagi T."/>
            <person name="Sakaki Y."/>
            <person name="Taudien S."/>
            <person name="Blechschmidt K."/>
            <person name="Polley A."/>
            <person name="Menzel U."/>
            <person name="Delabar J."/>
            <person name="Kumpf K."/>
            <person name="Lehmann R."/>
            <person name="Patterson D."/>
            <person name="Reichwald K."/>
            <person name="Rump A."/>
            <person name="Schillhabel M."/>
            <person name="Schudy A."/>
            <person name="Zimmermann W."/>
            <person name="Rosenthal A."/>
            <person name="Kudoh J."/>
            <person name="Shibuya K."/>
            <person name="Kawasaki K."/>
            <person name="Asakawa S."/>
            <person name="Shintani A."/>
            <person name="Sasaki T."/>
            <person name="Nagamine K."/>
            <person name="Mitsuyama S."/>
            <person name="Antonarakis S.E."/>
            <person name="Minoshima S."/>
            <person name="Shimizu N."/>
            <person name="Nordsiek G."/>
            <person name="Hornischer K."/>
            <person name="Brandt P."/>
            <person name="Scharfe M."/>
            <person name="Schoen O."/>
            <person name="Desario A."/>
            <person name="Reichelt J."/>
            <person name="Kauer G."/>
            <person name="Bloecker H."/>
            <person name="Ramser J."/>
            <person name="Beck A."/>
            <person name="Klages S."/>
            <person name="Hennig S."/>
            <person name="Riesselmann L."/>
            <person name="Dagand E."/>
            <person name="Wehrmeyer S."/>
            <person name="Borzym K."/>
            <person name="Gardiner K."/>
            <person name="Nizetic D."/>
            <person name="Francis F."/>
            <person name="Lehrach H."/>
            <person name="Reinhardt R."/>
            <person name="Yaspo M.-L."/>
        </authorList>
    </citation>
    <scope>NUCLEOTIDE SEQUENCE [LARGE SCALE GENOMIC DNA]</scope>
</reference>
<reference key="4">
    <citation type="submission" date="2005-09" db="EMBL/GenBank/DDBJ databases">
        <authorList>
            <person name="Mural R.J."/>
            <person name="Istrail S."/>
            <person name="Sutton G."/>
            <person name="Florea L."/>
            <person name="Halpern A.L."/>
            <person name="Mobarry C.M."/>
            <person name="Lippert R."/>
            <person name="Walenz B."/>
            <person name="Shatkay H."/>
            <person name="Dew I."/>
            <person name="Miller J.R."/>
            <person name="Flanigan M.J."/>
            <person name="Edwards N.J."/>
            <person name="Bolanos R."/>
            <person name="Fasulo D."/>
            <person name="Halldorsson B.V."/>
            <person name="Hannenhalli S."/>
            <person name="Turner R."/>
            <person name="Yooseph S."/>
            <person name="Lu F."/>
            <person name="Nusskern D.R."/>
            <person name="Shue B.C."/>
            <person name="Zheng X.H."/>
            <person name="Zhong F."/>
            <person name="Delcher A.L."/>
            <person name="Huson D.H."/>
            <person name="Kravitz S.A."/>
            <person name="Mouchard L."/>
            <person name="Reinert K."/>
            <person name="Remington K.A."/>
            <person name="Clark A.G."/>
            <person name="Waterman M.S."/>
            <person name="Eichler E.E."/>
            <person name="Adams M.D."/>
            <person name="Hunkapiller M.W."/>
            <person name="Myers E.W."/>
            <person name="Venter J.C."/>
        </authorList>
    </citation>
    <scope>NUCLEOTIDE SEQUENCE [LARGE SCALE GENOMIC DNA]</scope>
</reference>
<reference key="5">
    <citation type="journal article" date="2004" name="Genome Res.">
        <title>The status, quality, and expansion of the NIH full-length cDNA project: the Mammalian Gene Collection (MGC).</title>
        <authorList>
            <consortium name="The MGC Project Team"/>
        </authorList>
    </citation>
    <scope>NUCLEOTIDE SEQUENCE [LARGE SCALE MRNA] (ISOFORMS 1; 2 AND 3)</scope>
    <scope>VARIANTS GLY-18 AND PHE-28</scope>
</reference>
<reference key="6">
    <citation type="journal article" date="2004" name="J. Biol. Chem.">
        <title>Suppressors of T-cell receptor signaling Sts-1 and Sts-2 bind to Cbl and inhibit endocytosis of receptor tyrosine kinases.</title>
        <authorList>
            <person name="Kowanetz K."/>
            <person name="Crosetto N."/>
            <person name="Haglund K."/>
            <person name="Schmidt M.H."/>
            <person name="Heldin C.-H."/>
            <person name="Dikic I."/>
        </authorList>
    </citation>
    <scope>FUNCTION</scope>
    <scope>MUTAGENESIS OF TRP-317</scope>
    <scope>SUBUNIT</scope>
    <scope>INTERACTION WITH CBL AND UBIQUITIN</scope>
    <scope>IDENTIFICATION IN A COMPLEX WITH EGFR</scope>
    <scope>SUBCELLULAR LOCATION</scope>
</reference>
<reference key="7">
    <citation type="journal article" date="2007" name="Exp. Cell Res.">
        <title>The Cbl-interacting protein TULA inhibits dynamin-dependent endocytosis.</title>
        <authorList>
            <person name="Bertelsen V."/>
            <person name="Breen K."/>
            <person name="Sandvig K."/>
            <person name="Stang E."/>
            <person name="Madshus I.H."/>
        </authorList>
    </citation>
    <scope>FUNCTION</scope>
    <scope>INTERACTION WITH DYNAMIN</scope>
    <scope>MUTAGENESIS OF TRP-317</scope>
</reference>
<reference key="8">
    <citation type="journal article" date="2008" name="J. Cell. Biochem.">
        <title>TULA proteins regulate activity of the protein tyrosine kinase Syk.</title>
        <authorList>
            <person name="Agrawal R."/>
            <person name="Carpino N."/>
            <person name="Tsygankov A."/>
        </authorList>
    </citation>
    <scope>FUNCTION</scope>
    <scope>LACK OF PROTEIN PHOSPHATASE ACTIVITY</scope>
</reference>
<reference key="9">
    <citation type="journal article" date="2009" name="Sci. Signal.">
        <title>Quantitative phosphoproteomic analysis of T cell receptor signaling reveals system-wide modulation of protein-protein interactions.</title>
        <authorList>
            <person name="Mayya V."/>
            <person name="Lundgren D.H."/>
            <person name="Hwang S.-I."/>
            <person name="Rezaul K."/>
            <person name="Wu L."/>
            <person name="Eng J.K."/>
            <person name="Rodionov V."/>
            <person name="Han D.K."/>
        </authorList>
    </citation>
    <scope>IDENTIFICATION BY MASS SPECTROMETRY [LARGE SCALE ANALYSIS]</scope>
    <source>
        <tissue>Leukemic T-cell</tissue>
    </source>
</reference>
<reference key="10">
    <citation type="submission" date="2005-11" db="PDB data bank">
        <title>Solution structure of the UBA domain of human UBASH3A protein.</title>
        <authorList>
            <consortium name="RIKEN structural genomics initiative (RSGI)"/>
        </authorList>
    </citation>
    <scope>STRUCTURE BY NMR OF 20-70</scope>
</reference>
<name>UBS3A_HUMAN</name>
<sequence>MAAGETQLYAKVSNKLKSRSSPSLLEPLLAMGFPVHTALKALAATGRKTAEEALAWLHDHCNDPSLDDPIPQEYALFLCPTGPLLEKLQEFWRESKRQCAKNRAHEVFPHVTLCDFFTCEDQKVECLYEALKRAGDRLLGSFPTAVPLALHSSISYLGFFVSGSPADVIREFAMTFATEASLLAGTSVSRFWIFSQVPGHGPNLRLSNLTRASFVSHYILQKYCSVKPCTKQLHLTLAHKFYPHHQRTLEQLARAIPLGHSCQWTAALYSRDMRFVHYQTLRALFQYKPQNVDELTLSPGDYIFVDPTQQDEASEGWVIGISQRTGCRGFLPENYTDRASESDTWVKHRMYTFSLATDLNSRKDGEASSRCSGEFLPQTARSLSSLQALQATVARKSVLVVRHGERVDQIFGKAWLQQCSTPDGKYYRPDLNFPCSLPRRSRGIKDFENDPPLSSCGIFQSRIAGDALLDSGIRISSVFASPALRCVQTAKLILEELKLEKKIKIRVEPGIFEWTKWEAGKTTPTLMSLEELKEANFNIDTDYRPAFPLSALMPAESYQEYMDRCTASMVQIVNTCPQDTGVILIVSHGSTLDSCTRPLLGLPPRECGDFAQLVRKIPSLGMCFCEENKEEGKWELVNPPVKTLTHGANAAFNWRNWISGN</sequence>
<evidence type="ECO:0000255" key="1">
    <source>
        <dbReference type="PROSITE-ProRule" id="PRU00192"/>
    </source>
</evidence>
<evidence type="ECO:0000255" key="2">
    <source>
        <dbReference type="PROSITE-ProRule" id="PRU00212"/>
    </source>
</evidence>
<evidence type="ECO:0000269" key="3">
    <source>
    </source>
</evidence>
<evidence type="ECO:0000269" key="4">
    <source>
    </source>
</evidence>
<evidence type="ECO:0000269" key="5">
    <source>
    </source>
</evidence>
<evidence type="ECO:0000269" key="6">
    <source>
    </source>
</evidence>
<evidence type="ECO:0000269" key="7">
    <source>
    </source>
</evidence>
<evidence type="ECO:0000269" key="8">
    <source>
    </source>
</evidence>
<evidence type="ECO:0000303" key="9">
    <source>
    </source>
</evidence>
<evidence type="ECO:0000303" key="10">
    <source>
    </source>
</evidence>
<evidence type="ECO:0000303" key="11">
    <source>
    </source>
</evidence>
<evidence type="ECO:0000305" key="12"/>
<evidence type="ECO:0007829" key="13">
    <source>
        <dbReference type="PDB" id="2CRN"/>
    </source>
</evidence>
<evidence type="ECO:0007829" key="14">
    <source>
        <dbReference type="PDB" id="5WDI"/>
    </source>
</evidence>
<gene>
    <name type="primary">UBASH3A</name>
    <name type="synonym">STS2</name>
</gene>
<accession>P57075</accession>
<accession>G5E9E4</accession>
<accession>Q6HA34</accession>
<accession>Q6HA35</accession>
<accession>Q6ISI6</accession>
<accession>Q6ISK3</accession>
<accession>Q6ISS9</accession>
<dbReference type="EMBL" id="AJ277750">
    <property type="protein sequence ID" value="CAB91543.1"/>
    <property type="molecule type" value="mRNA"/>
</dbReference>
<dbReference type="EMBL" id="AF520809">
    <property type="protein sequence ID" value="AAP80731.1"/>
    <property type="molecule type" value="mRNA"/>
</dbReference>
<dbReference type="EMBL" id="AF521702">
    <property type="protein sequence ID" value="AAP80738.1"/>
    <property type="molecule type" value="mRNA"/>
</dbReference>
<dbReference type="EMBL" id="AP001746">
    <property type="status" value="NOT_ANNOTATED_CDS"/>
    <property type="molecule type" value="Genomic_DNA"/>
</dbReference>
<dbReference type="EMBL" id="CH471079">
    <property type="protein sequence ID" value="EAX09560.1"/>
    <property type="molecule type" value="Genomic_DNA"/>
</dbReference>
<dbReference type="EMBL" id="BC069357">
    <property type="protein sequence ID" value="AAH69357.1"/>
    <property type="molecule type" value="mRNA"/>
</dbReference>
<dbReference type="EMBL" id="BC069483">
    <property type="protein sequence ID" value="AAH69483.1"/>
    <property type="molecule type" value="mRNA"/>
</dbReference>
<dbReference type="EMBL" id="BC069511">
    <property type="protein sequence ID" value="AAH69511.1"/>
    <property type="molecule type" value="mRNA"/>
</dbReference>
<dbReference type="EMBL" id="BC069577">
    <property type="status" value="NOT_ANNOTATED_CDS"/>
    <property type="molecule type" value="mRNA"/>
</dbReference>
<dbReference type="CCDS" id="CCDS13687.1">
    <molecule id="P57075-1"/>
</dbReference>
<dbReference type="CCDS" id="CCDS33566.1">
    <molecule id="P57075-2"/>
</dbReference>
<dbReference type="CCDS" id="CCDS58791.1">
    <molecule id="P57075-3"/>
</dbReference>
<dbReference type="RefSeq" id="NP_001001895.1">
    <molecule id="P57075-2"/>
    <property type="nucleotide sequence ID" value="NM_001001895.3"/>
</dbReference>
<dbReference type="RefSeq" id="NP_001230396.1">
    <molecule id="P57075-3"/>
    <property type="nucleotide sequence ID" value="NM_001243467.2"/>
</dbReference>
<dbReference type="RefSeq" id="NP_061834.1">
    <molecule id="P57075-1"/>
    <property type="nucleotide sequence ID" value="NM_018961.4"/>
</dbReference>
<dbReference type="PDB" id="2CRN">
    <property type="method" value="NMR"/>
    <property type="chains" value="A=20-70"/>
</dbReference>
<dbReference type="PDB" id="5WDI">
    <property type="method" value="X-ray"/>
    <property type="resolution" value="2.43 A"/>
    <property type="chains" value="A/B=394-658"/>
</dbReference>
<dbReference type="PDBsum" id="2CRN"/>
<dbReference type="PDBsum" id="5WDI"/>
<dbReference type="SMR" id="P57075"/>
<dbReference type="BioGRID" id="119748">
    <property type="interactions" value="126"/>
</dbReference>
<dbReference type="FunCoup" id="P57075">
    <property type="interactions" value="877"/>
</dbReference>
<dbReference type="IntAct" id="P57075">
    <property type="interactions" value="98"/>
</dbReference>
<dbReference type="MINT" id="P57075"/>
<dbReference type="STRING" id="9606.ENSP00000317327"/>
<dbReference type="DEPOD" id="UBASH3A"/>
<dbReference type="GlyGen" id="P57075">
    <property type="glycosylation" value="1 site, 1 O-linked glycan (1 site)"/>
</dbReference>
<dbReference type="iPTMnet" id="P57075"/>
<dbReference type="PhosphoSitePlus" id="P57075"/>
<dbReference type="BioMuta" id="UBASH3A"/>
<dbReference type="DMDM" id="10720330"/>
<dbReference type="jPOST" id="P57075"/>
<dbReference type="MassIVE" id="P57075"/>
<dbReference type="PaxDb" id="9606-ENSP00000317327"/>
<dbReference type="PeptideAtlas" id="P57075"/>
<dbReference type="ProteomicsDB" id="33914"/>
<dbReference type="ProteomicsDB" id="56982">
    <molecule id="P57075-1"/>
</dbReference>
<dbReference type="ProteomicsDB" id="56983">
    <molecule id="P57075-2"/>
</dbReference>
<dbReference type="Antibodypedia" id="23818">
    <property type="antibodies" value="332 antibodies from 34 providers"/>
</dbReference>
<dbReference type="DNASU" id="53347"/>
<dbReference type="Ensembl" id="ENST00000291535.11">
    <molecule id="P57075-2"/>
    <property type="protein sequence ID" value="ENSP00000291535.6"/>
    <property type="gene ID" value="ENSG00000160185.15"/>
</dbReference>
<dbReference type="Ensembl" id="ENST00000319294.11">
    <molecule id="P57075-1"/>
    <property type="protein sequence ID" value="ENSP00000317327.6"/>
    <property type="gene ID" value="ENSG00000160185.15"/>
</dbReference>
<dbReference type="Ensembl" id="ENST00000398367.1">
    <molecule id="P57075-3"/>
    <property type="protein sequence ID" value="ENSP00000381408.1"/>
    <property type="gene ID" value="ENSG00000160185.15"/>
</dbReference>
<dbReference type="GeneID" id="53347"/>
<dbReference type="KEGG" id="hsa:53347"/>
<dbReference type="MANE-Select" id="ENST00000319294.11">
    <property type="protein sequence ID" value="ENSP00000317327.6"/>
    <property type="RefSeq nucleotide sequence ID" value="NM_018961.4"/>
    <property type="RefSeq protein sequence ID" value="NP_061834.1"/>
</dbReference>
<dbReference type="UCSC" id="uc002zbe.4">
    <molecule id="P57075-1"/>
    <property type="organism name" value="human"/>
</dbReference>
<dbReference type="AGR" id="HGNC:12462"/>
<dbReference type="CTD" id="53347"/>
<dbReference type="DisGeNET" id="53347"/>
<dbReference type="GeneCards" id="UBASH3A"/>
<dbReference type="HGNC" id="HGNC:12462">
    <property type="gene designation" value="UBASH3A"/>
</dbReference>
<dbReference type="HPA" id="ENSG00000160185">
    <property type="expression patterns" value="Tissue enriched (lymphoid)"/>
</dbReference>
<dbReference type="MIM" id="605736">
    <property type="type" value="gene"/>
</dbReference>
<dbReference type="neXtProt" id="NX_P57075"/>
<dbReference type="OpenTargets" id="ENSG00000160185"/>
<dbReference type="PharmGKB" id="PA37112"/>
<dbReference type="VEuPathDB" id="HostDB:ENSG00000160185"/>
<dbReference type="eggNOG" id="KOG3734">
    <property type="taxonomic scope" value="Eukaryota"/>
</dbReference>
<dbReference type="GeneTree" id="ENSGT00940000160841"/>
<dbReference type="HOGENOM" id="CLU_016516_0_0_1"/>
<dbReference type="InParanoid" id="P57075"/>
<dbReference type="OMA" id="AFNWKHI"/>
<dbReference type="OrthoDB" id="414418at2759"/>
<dbReference type="PAN-GO" id="P57075">
    <property type="GO annotations" value="2 GO annotations based on evolutionary models"/>
</dbReference>
<dbReference type="PhylomeDB" id="P57075"/>
<dbReference type="TreeFam" id="TF313334"/>
<dbReference type="PathwayCommons" id="P57075"/>
<dbReference type="SignaLink" id="P57075"/>
<dbReference type="BioGRID-ORCS" id="53347">
    <property type="hits" value="35 hits in 1158 CRISPR screens"/>
</dbReference>
<dbReference type="ChiTaRS" id="UBASH3A">
    <property type="organism name" value="human"/>
</dbReference>
<dbReference type="EvolutionaryTrace" id="P57075"/>
<dbReference type="GeneWiki" id="UBASH3A"/>
<dbReference type="GenomeRNAi" id="53347"/>
<dbReference type="Pharos" id="P57075">
    <property type="development level" value="Tbio"/>
</dbReference>
<dbReference type="PRO" id="PR:P57075"/>
<dbReference type="Proteomes" id="UP000005640">
    <property type="component" value="Chromosome 21"/>
</dbReference>
<dbReference type="RNAct" id="P57075">
    <property type="molecule type" value="protein"/>
</dbReference>
<dbReference type="Bgee" id="ENSG00000160185">
    <property type="expression patterns" value="Expressed in granulocyte and 86 other cell types or tissues"/>
</dbReference>
<dbReference type="ExpressionAtlas" id="P57075">
    <property type="expression patterns" value="baseline and differential"/>
</dbReference>
<dbReference type="GO" id="GO:0005737">
    <property type="term" value="C:cytoplasm"/>
    <property type="evidence" value="ECO:0000318"/>
    <property type="project" value="GO_Central"/>
</dbReference>
<dbReference type="GO" id="GO:0005829">
    <property type="term" value="C:cytosol"/>
    <property type="evidence" value="ECO:0000314"/>
    <property type="project" value="HPA"/>
</dbReference>
<dbReference type="GO" id="GO:0070062">
    <property type="term" value="C:extracellular exosome"/>
    <property type="evidence" value="ECO:0007005"/>
    <property type="project" value="UniProtKB"/>
</dbReference>
<dbReference type="GO" id="GO:0016607">
    <property type="term" value="C:nuclear speck"/>
    <property type="evidence" value="ECO:0000314"/>
    <property type="project" value="HPA"/>
</dbReference>
<dbReference type="GO" id="GO:0005654">
    <property type="term" value="C:nucleoplasm"/>
    <property type="evidence" value="ECO:0000314"/>
    <property type="project" value="HPA"/>
</dbReference>
<dbReference type="GO" id="GO:0050860">
    <property type="term" value="P:negative regulation of T cell receptor signaling pathway"/>
    <property type="evidence" value="ECO:0000318"/>
    <property type="project" value="GO_Central"/>
</dbReference>
<dbReference type="GO" id="GO:0001817">
    <property type="term" value="P:regulation of cytokine production"/>
    <property type="evidence" value="ECO:0007669"/>
    <property type="project" value="Ensembl"/>
</dbReference>
<dbReference type="CDD" id="cd07067">
    <property type="entry name" value="HP_PGM_like"/>
    <property type="match status" value="1"/>
</dbReference>
<dbReference type="CDD" id="cd11937">
    <property type="entry name" value="SH3_UBASH3A"/>
    <property type="match status" value="1"/>
</dbReference>
<dbReference type="CDD" id="cd14300">
    <property type="entry name" value="UBA_UBS3A_like"/>
    <property type="match status" value="1"/>
</dbReference>
<dbReference type="FunFam" id="1.10.8.10:FF:000076">
    <property type="entry name" value="Ubiquitin associated and SH3 domain containing A"/>
    <property type="match status" value="1"/>
</dbReference>
<dbReference type="FunFam" id="3.40.50.1240:FF:000016">
    <property type="entry name" value="Ubiquitin-associated and SH3 domain-containing protein A"/>
    <property type="match status" value="1"/>
</dbReference>
<dbReference type="FunFam" id="2.30.30.40:FF:000052">
    <property type="entry name" value="Ubiquitin-associated and SH3 domain-containing protein B"/>
    <property type="match status" value="1"/>
</dbReference>
<dbReference type="Gene3D" id="1.10.8.10">
    <property type="entry name" value="DNA helicase RuvA subunit, C-terminal domain"/>
    <property type="match status" value="1"/>
</dbReference>
<dbReference type="Gene3D" id="3.40.50.1240">
    <property type="entry name" value="Phosphoglycerate mutase-like"/>
    <property type="match status" value="1"/>
</dbReference>
<dbReference type="Gene3D" id="2.30.30.40">
    <property type="entry name" value="SH3 Domains"/>
    <property type="match status" value="1"/>
</dbReference>
<dbReference type="InterPro" id="IPR013078">
    <property type="entry name" value="His_Pase_superF_clade-1"/>
</dbReference>
<dbReference type="InterPro" id="IPR029033">
    <property type="entry name" value="His_PPase_superfam"/>
</dbReference>
<dbReference type="InterPro" id="IPR051710">
    <property type="entry name" value="Phosphatase_SH3-domain"/>
</dbReference>
<dbReference type="InterPro" id="IPR036028">
    <property type="entry name" value="SH3-like_dom_sf"/>
</dbReference>
<dbReference type="InterPro" id="IPR001452">
    <property type="entry name" value="SH3_domain"/>
</dbReference>
<dbReference type="InterPro" id="IPR015940">
    <property type="entry name" value="UBA"/>
</dbReference>
<dbReference type="InterPro" id="IPR009060">
    <property type="entry name" value="UBA-like_sf"/>
</dbReference>
<dbReference type="InterPro" id="IPR035634">
    <property type="entry name" value="UBASH3A_SH3"/>
</dbReference>
<dbReference type="PANTHER" id="PTHR16469">
    <property type="entry name" value="UBIQUITIN-ASSOCIATED AND SH3 DOMAIN-CONTAINING BA-RELATED"/>
    <property type="match status" value="1"/>
</dbReference>
<dbReference type="PANTHER" id="PTHR16469:SF7">
    <property type="entry name" value="UBIQUITIN-ASSOCIATED AND SH3 DOMAIN-CONTAINING PROTEIN A"/>
    <property type="match status" value="1"/>
</dbReference>
<dbReference type="Pfam" id="PF00300">
    <property type="entry name" value="His_Phos_1"/>
    <property type="match status" value="1"/>
</dbReference>
<dbReference type="Pfam" id="PF14604">
    <property type="entry name" value="SH3_9"/>
    <property type="match status" value="1"/>
</dbReference>
<dbReference type="Pfam" id="PF22562">
    <property type="entry name" value="UBA_7"/>
    <property type="match status" value="1"/>
</dbReference>
<dbReference type="SMART" id="SM00326">
    <property type="entry name" value="SH3"/>
    <property type="match status" value="1"/>
</dbReference>
<dbReference type="SUPFAM" id="SSF53254">
    <property type="entry name" value="Phosphoglycerate mutase-like"/>
    <property type="match status" value="1"/>
</dbReference>
<dbReference type="SUPFAM" id="SSF50044">
    <property type="entry name" value="SH3-domain"/>
    <property type="match status" value="1"/>
</dbReference>
<dbReference type="SUPFAM" id="SSF46934">
    <property type="entry name" value="UBA-like"/>
    <property type="match status" value="1"/>
</dbReference>
<dbReference type="PROSITE" id="PS50002">
    <property type="entry name" value="SH3"/>
    <property type="match status" value="1"/>
</dbReference>
<dbReference type="PROSITE" id="PS50030">
    <property type="entry name" value="UBA"/>
    <property type="match status" value="1"/>
</dbReference>
<keyword id="KW-0002">3D-structure</keyword>
<keyword id="KW-0025">Alternative splicing</keyword>
<keyword id="KW-0963">Cytoplasm</keyword>
<keyword id="KW-0539">Nucleus</keyword>
<keyword id="KW-1267">Proteomics identification</keyword>
<keyword id="KW-1185">Reference proteome</keyword>
<keyword id="KW-0728">SH3 domain</keyword>